<sequence>MSTDNKQSLPALTLAAIGVVYGDIGTSPLYTLRECLSGQFGFGVERDAVFGFLSLIFWLLIFTVSIKYITFVMRADNAGEGGILTLMSLAGRNTSARMTSVLVILGLIGGSFFYGEVVITPAISVMSAIEGLEIIAPQLDTWIVPISIIVLTLLFVIQKHGTGMVGKLFAPIMLIWFLLLAVLGARSIYANPEVLQALNPYWAVHFFLQYKTVSFIALGAVVLSITGVEALYADMGHFGKLPIRVAWFSVVLPSLVLNYFGQGALLLKHPEAIKNPFFLLAPEWALIPMLIIATLATVIASQAVISGVFSLTRQAVRLGYLSPMRIIHTSEMESGQIYIPFINWLLYVSVVIVIVSFEHSSNLAAAYGIAVTGTMVLTSILSATVARKNWHWNKLFVGLMLVAFLCIDIPLFSANLDKIVSGGWLPLSLGMVMFTVMTTWKSERFRLLRRMHEHGNSLEAMISSLEKSPPVRVPGTAVYMSRALNVIPFALLHNLKHNKVLHERVILLTLRTEDAPYVHNVRRVQIEQLSPSFWRVVASYGWRETPNVEEVFHRCGLEGLSCRMMETSFFMSHESLIIGKRPWYLRLRGKLYLLLQRNALRAPDQFEIPPNRVIELGTQVEI</sequence>
<keyword id="KW-0997">Cell inner membrane</keyword>
<keyword id="KW-1003">Cell membrane</keyword>
<keyword id="KW-0406">Ion transport</keyword>
<keyword id="KW-0472">Membrane</keyword>
<keyword id="KW-0630">Potassium</keyword>
<keyword id="KW-0633">Potassium transport</keyword>
<keyword id="KW-0769">Symport</keyword>
<keyword id="KW-0812">Transmembrane</keyword>
<keyword id="KW-1133">Transmembrane helix</keyword>
<keyword id="KW-0813">Transport</keyword>
<organism>
    <name type="scientific">Klebsiella pneumoniae subsp. pneumoniae (strain ATCC 700721 / MGH 78578)</name>
    <dbReference type="NCBI Taxonomy" id="272620"/>
    <lineage>
        <taxon>Bacteria</taxon>
        <taxon>Pseudomonadati</taxon>
        <taxon>Pseudomonadota</taxon>
        <taxon>Gammaproteobacteria</taxon>
        <taxon>Enterobacterales</taxon>
        <taxon>Enterobacteriaceae</taxon>
        <taxon>Klebsiella/Raoultella group</taxon>
        <taxon>Klebsiella</taxon>
        <taxon>Klebsiella pneumoniae complex</taxon>
    </lineage>
</organism>
<protein>
    <recommendedName>
        <fullName evidence="1">Low affinity potassium transport system protein Kup</fullName>
    </recommendedName>
    <alternativeName>
        <fullName evidence="1">Kup system potassium uptake protein</fullName>
    </alternativeName>
</protein>
<comment type="function">
    <text evidence="1">Responsible for the low-affinity transport of potassium into the cell. Likely operates as a K(+):H(+) symporter.</text>
</comment>
<comment type="catalytic activity">
    <reaction evidence="1">
        <text>K(+)(in) + H(+)(in) = K(+)(out) + H(+)(out)</text>
        <dbReference type="Rhea" id="RHEA:28490"/>
        <dbReference type="ChEBI" id="CHEBI:15378"/>
        <dbReference type="ChEBI" id="CHEBI:29103"/>
    </reaction>
    <physiologicalReaction direction="right-to-left" evidence="1">
        <dbReference type="Rhea" id="RHEA:28492"/>
    </physiologicalReaction>
</comment>
<comment type="subcellular location">
    <subcellularLocation>
        <location evidence="1">Cell inner membrane</location>
        <topology evidence="1">Multi-pass membrane protein</topology>
    </subcellularLocation>
</comment>
<comment type="similarity">
    <text evidence="1">Belongs to the HAK/KUP transporter (TC 2.A.72) family.</text>
</comment>
<name>KUP_KLEP7</name>
<evidence type="ECO:0000255" key="1">
    <source>
        <dbReference type="HAMAP-Rule" id="MF_01522"/>
    </source>
</evidence>
<reference key="1">
    <citation type="submission" date="2006-09" db="EMBL/GenBank/DDBJ databases">
        <authorList>
            <consortium name="The Klebsiella pneumonia Genome Sequencing Project"/>
            <person name="McClelland M."/>
            <person name="Sanderson E.K."/>
            <person name="Spieth J."/>
            <person name="Clifton W.S."/>
            <person name="Latreille P."/>
            <person name="Sabo A."/>
            <person name="Pepin K."/>
            <person name="Bhonagiri V."/>
            <person name="Porwollik S."/>
            <person name="Ali J."/>
            <person name="Wilson R.K."/>
        </authorList>
    </citation>
    <scope>NUCLEOTIDE SEQUENCE [LARGE SCALE GENOMIC DNA]</scope>
    <source>
        <strain>ATCC 700721 / MGH 78578</strain>
    </source>
</reference>
<feature type="chain" id="PRO_1000068649" description="Low affinity potassium transport system protein Kup">
    <location>
        <begin position="1"/>
        <end position="622"/>
    </location>
</feature>
<feature type="transmembrane region" description="Helical" evidence="1">
    <location>
        <begin position="9"/>
        <end position="29"/>
    </location>
</feature>
<feature type="transmembrane region" description="Helical" evidence="1">
    <location>
        <begin position="49"/>
        <end position="69"/>
    </location>
</feature>
<feature type="transmembrane region" description="Helical" evidence="1">
    <location>
        <begin position="101"/>
        <end position="121"/>
    </location>
</feature>
<feature type="transmembrane region" description="Helical" evidence="1">
    <location>
        <begin position="137"/>
        <end position="157"/>
    </location>
</feature>
<feature type="transmembrane region" description="Helical" evidence="1">
    <location>
        <begin position="163"/>
        <end position="183"/>
    </location>
</feature>
<feature type="transmembrane region" description="Helical" evidence="1">
    <location>
        <begin position="213"/>
        <end position="233"/>
    </location>
</feature>
<feature type="transmembrane region" description="Helical" evidence="1">
    <location>
        <begin position="247"/>
        <end position="267"/>
    </location>
</feature>
<feature type="transmembrane region" description="Helical" evidence="1">
    <location>
        <begin position="276"/>
        <end position="296"/>
    </location>
</feature>
<feature type="transmembrane region" description="Helical" evidence="1">
    <location>
        <begin position="337"/>
        <end position="357"/>
    </location>
</feature>
<feature type="transmembrane region" description="Helical" evidence="1">
    <location>
        <begin position="363"/>
        <end position="383"/>
    </location>
</feature>
<feature type="transmembrane region" description="Helical" evidence="1">
    <location>
        <begin position="395"/>
        <end position="415"/>
    </location>
</feature>
<feature type="transmembrane region" description="Helical" evidence="1">
    <location>
        <begin position="419"/>
        <end position="439"/>
    </location>
</feature>
<dbReference type="EMBL" id="CP000647">
    <property type="protein sequence ID" value="ABR79535.1"/>
    <property type="molecule type" value="Genomic_DNA"/>
</dbReference>
<dbReference type="RefSeq" id="WP_002882520.1">
    <property type="nucleotide sequence ID" value="NC_009648.1"/>
</dbReference>
<dbReference type="STRING" id="272620.KPN_04152"/>
<dbReference type="PaxDb" id="272620-KPN_04152"/>
<dbReference type="EnsemblBacteria" id="ABR79535">
    <property type="protein sequence ID" value="ABR79535"/>
    <property type="gene ID" value="KPN_04152"/>
</dbReference>
<dbReference type="KEGG" id="kpn:KPN_04152"/>
<dbReference type="HOGENOM" id="CLU_008142_4_2_6"/>
<dbReference type="Proteomes" id="UP000000265">
    <property type="component" value="Chromosome"/>
</dbReference>
<dbReference type="GO" id="GO:0005886">
    <property type="term" value="C:plasma membrane"/>
    <property type="evidence" value="ECO:0007669"/>
    <property type="project" value="UniProtKB-SubCell"/>
</dbReference>
<dbReference type="GO" id="GO:0015079">
    <property type="term" value="F:potassium ion transmembrane transporter activity"/>
    <property type="evidence" value="ECO:0007669"/>
    <property type="project" value="UniProtKB-UniRule"/>
</dbReference>
<dbReference type="GO" id="GO:0015293">
    <property type="term" value="F:symporter activity"/>
    <property type="evidence" value="ECO:0007669"/>
    <property type="project" value="UniProtKB-UniRule"/>
</dbReference>
<dbReference type="HAMAP" id="MF_01522">
    <property type="entry name" value="Kup"/>
    <property type="match status" value="1"/>
</dbReference>
<dbReference type="InterPro" id="IPR003855">
    <property type="entry name" value="K+_transporter"/>
</dbReference>
<dbReference type="InterPro" id="IPR053952">
    <property type="entry name" value="K_trans_C"/>
</dbReference>
<dbReference type="InterPro" id="IPR053951">
    <property type="entry name" value="K_trans_N"/>
</dbReference>
<dbReference type="InterPro" id="IPR023051">
    <property type="entry name" value="Kup"/>
</dbReference>
<dbReference type="NCBIfam" id="TIGR00794">
    <property type="entry name" value="kup"/>
    <property type="match status" value="1"/>
</dbReference>
<dbReference type="NCBIfam" id="NF008015">
    <property type="entry name" value="PRK10745.1"/>
    <property type="match status" value="1"/>
</dbReference>
<dbReference type="PANTHER" id="PTHR30540:SF79">
    <property type="entry name" value="LOW AFFINITY POTASSIUM TRANSPORT SYSTEM PROTEIN KUP"/>
    <property type="match status" value="1"/>
</dbReference>
<dbReference type="PANTHER" id="PTHR30540">
    <property type="entry name" value="OSMOTIC STRESS POTASSIUM TRANSPORTER"/>
    <property type="match status" value="1"/>
</dbReference>
<dbReference type="Pfam" id="PF02705">
    <property type="entry name" value="K_trans"/>
    <property type="match status" value="1"/>
</dbReference>
<dbReference type="Pfam" id="PF22776">
    <property type="entry name" value="K_trans_C"/>
    <property type="match status" value="1"/>
</dbReference>
<accession>A6TG51</accession>
<proteinExistence type="inferred from homology"/>
<gene>
    <name evidence="1" type="primary">kup</name>
    <name type="ordered locus">KPN78578_41110</name>
    <name type="ORF">KPN_04152</name>
</gene>